<comment type="function">
    <text evidence="2">One of the primary rRNA binding proteins, it binds directly to 16S rRNA where it nucleates assembly of the head domain of the 30S subunit. Is located at the subunit interface close to the decoding center, probably blocks exit of the E-site tRNA.</text>
</comment>
<comment type="subunit">
    <text evidence="2">Part of the 30S ribosomal subunit. Contacts proteins S9 and S11.</text>
</comment>
<comment type="similarity">
    <text evidence="2">Belongs to the universal ribosomal protein uS7 family.</text>
</comment>
<keyword id="KW-1185">Reference proteome</keyword>
<keyword id="KW-0687">Ribonucleoprotein</keyword>
<keyword id="KW-0689">Ribosomal protein</keyword>
<keyword id="KW-0694">RNA-binding</keyword>
<keyword id="KW-0699">rRNA-binding</keyword>
<gene>
    <name evidence="2" type="primary">rpsG</name>
    <name type="ordered locus">Z4699</name>
    <name type="ordered locus">ECs4192</name>
</gene>
<proteinExistence type="inferred from homology"/>
<reference key="1">
    <citation type="journal article" date="2001" name="Nature">
        <title>Genome sequence of enterohaemorrhagic Escherichia coli O157:H7.</title>
        <authorList>
            <person name="Perna N.T."/>
            <person name="Plunkett G. III"/>
            <person name="Burland V."/>
            <person name="Mau B."/>
            <person name="Glasner J.D."/>
            <person name="Rose D.J."/>
            <person name="Mayhew G.F."/>
            <person name="Evans P.S."/>
            <person name="Gregor J."/>
            <person name="Kirkpatrick H.A."/>
            <person name="Posfai G."/>
            <person name="Hackett J."/>
            <person name="Klink S."/>
            <person name="Boutin A."/>
            <person name="Shao Y."/>
            <person name="Miller L."/>
            <person name="Grotbeck E.J."/>
            <person name="Davis N.W."/>
            <person name="Lim A."/>
            <person name="Dimalanta E.T."/>
            <person name="Potamousis K."/>
            <person name="Apodaca J."/>
            <person name="Anantharaman T.S."/>
            <person name="Lin J."/>
            <person name="Yen G."/>
            <person name="Schwartz D.C."/>
            <person name="Welch R.A."/>
            <person name="Blattner F.R."/>
        </authorList>
    </citation>
    <scope>NUCLEOTIDE SEQUENCE [LARGE SCALE GENOMIC DNA]</scope>
    <source>
        <strain>O157:H7 / EDL933 / ATCC 700927 / EHEC</strain>
    </source>
</reference>
<reference key="2">
    <citation type="journal article" date="2001" name="DNA Res.">
        <title>Complete genome sequence of enterohemorrhagic Escherichia coli O157:H7 and genomic comparison with a laboratory strain K-12.</title>
        <authorList>
            <person name="Hayashi T."/>
            <person name="Makino K."/>
            <person name="Ohnishi M."/>
            <person name="Kurokawa K."/>
            <person name="Ishii K."/>
            <person name="Yokoyama K."/>
            <person name="Han C.-G."/>
            <person name="Ohtsubo E."/>
            <person name="Nakayama K."/>
            <person name="Murata T."/>
            <person name="Tanaka M."/>
            <person name="Tobe T."/>
            <person name="Iida T."/>
            <person name="Takami H."/>
            <person name="Honda T."/>
            <person name="Sasakawa C."/>
            <person name="Ogasawara N."/>
            <person name="Yasunaga T."/>
            <person name="Kuhara S."/>
            <person name="Shiba T."/>
            <person name="Hattori M."/>
            <person name="Shinagawa H."/>
        </authorList>
    </citation>
    <scope>NUCLEOTIDE SEQUENCE [LARGE SCALE GENOMIC DNA]</scope>
    <source>
        <strain>O157:H7 / Sakai / RIMD 0509952 / EHEC</strain>
    </source>
</reference>
<feature type="initiator methionine" description="Removed" evidence="1">
    <location>
        <position position="1"/>
    </location>
</feature>
<feature type="chain" id="PRO_0000124261" description="Small ribosomal subunit protein uS7">
    <location>
        <begin position="2"/>
        <end position="156"/>
    </location>
</feature>
<accession>P66607</accession>
<accession>Q8X887</accession>
<evidence type="ECO:0000250" key="1"/>
<evidence type="ECO:0000255" key="2">
    <source>
        <dbReference type="HAMAP-Rule" id="MF_00480"/>
    </source>
</evidence>
<evidence type="ECO:0000305" key="3"/>
<name>RS7_ECO57</name>
<organism>
    <name type="scientific">Escherichia coli O157:H7</name>
    <dbReference type="NCBI Taxonomy" id="83334"/>
    <lineage>
        <taxon>Bacteria</taxon>
        <taxon>Pseudomonadati</taxon>
        <taxon>Pseudomonadota</taxon>
        <taxon>Gammaproteobacteria</taxon>
        <taxon>Enterobacterales</taxon>
        <taxon>Enterobacteriaceae</taxon>
        <taxon>Escherichia</taxon>
    </lineage>
</organism>
<dbReference type="EMBL" id="AE005174">
    <property type="protein sequence ID" value="AAG58448.1"/>
    <property type="molecule type" value="Genomic_DNA"/>
</dbReference>
<dbReference type="EMBL" id="BA000007">
    <property type="protein sequence ID" value="BAB37615.1"/>
    <property type="molecule type" value="Genomic_DNA"/>
</dbReference>
<dbReference type="PIR" id="D85998">
    <property type="entry name" value="D85998"/>
</dbReference>
<dbReference type="PIR" id="H91152">
    <property type="entry name" value="H91152"/>
</dbReference>
<dbReference type="RefSeq" id="NP_312219.1">
    <property type="nucleotide sequence ID" value="NC_002695.1"/>
</dbReference>
<dbReference type="RefSeq" id="WP_001138043.1">
    <property type="nucleotide sequence ID" value="NZ_VOAI01000004.1"/>
</dbReference>
<dbReference type="SMR" id="P66607"/>
<dbReference type="STRING" id="155864.Z4699"/>
<dbReference type="GeneID" id="915955"/>
<dbReference type="GeneID" id="93778657"/>
<dbReference type="KEGG" id="ece:Z4699"/>
<dbReference type="KEGG" id="ecs:ECs_4192"/>
<dbReference type="PATRIC" id="fig|386585.9.peg.4375"/>
<dbReference type="eggNOG" id="COG0049">
    <property type="taxonomic scope" value="Bacteria"/>
</dbReference>
<dbReference type="HOGENOM" id="CLU_072226_1_1_6"/>
<dbReference type="OMA" id="DDTHRMA"/>
<dbReference type="Proteomes" id="UP000000558">
    <property type="component" value="Chromosome"/>
</dbReference>
<dbReference type="Proteomes" id="UP000002519">
    <property type="component" value="Chromosome"/>
</dbReference>
<dbReference type="GO" id="GO:0015935">
    <property type="term" value="C:small ribosomal subunit"/>
    <property type="evidence" value="ECO:0007669"/>
    <property type="project" value="InterPro"/>
</dbReference>
<dbReference type="GO" id="GO:0019843">
    <property type="term" value="F:rRNA binding"/>
    <property type="evidence" value="ECO:0007669"/>
    <property type="project" value="UniProtKB-UniRule"/>
</dbReference>
<dbReference type="GO" id="GO:0003735">
    <property type="term" value="F:structural constituent of ribosome"/>
    <property type="evidence" value="ECO:0007669"/>
    <property type="project" value="InterPro"/>
</dbReference>
<dbReference type="GO" id="GO:0000049">
    <property type="term" value="F:tRNA binding"/>
    <property type="evidence" value="ECO:0007669"/>
    <property type="project" value="UniProtKB-UniRule"/>
</dbReference>
<dbReference type="GO" id="GO:0006412">
    <property type="term" value="P:translation"/>
    <property type="evidence" value="ECO:0007669"/>
    <property type="project" value="UniProtKB-UniRule"/>
</dbReference>
<dbReference type="CDD" id="cd14869">
    <property type="entry name" value="uS7_Bacteria"/>
    <property type="match status" value="1"/>
</dbReference>
<dbReference type="FunFam" id="1.10.455.10:FF:000001">
    <property type="entry name" value="30S ribosomal protein S7"/>
    <property type="match status" value="1"/>
</dbReference>
<dbReference type="Gene3D" id="1.10.455.10">
    <property type="entry name" value="Ribosomal protein S7 domain"/>
    <property type="match status" value="1"/>
</dbReference>
<dbReference type="HAMAP" id="MF_00480_B">
    <property type="entry name" value="Ribosomal_uS7_B"/>
    <property type="match status" value="1"/>
</dbReference>
<dbReference type="InterPro" id="IPR000235">
    <property type="entry name" value="Ribosomal_uS7"/>
</dbReference>
<dbReference type="InterPro" id="IPR005717">
    <property type="entry name" value="Ribosomal_uS7_bac/org-type"/>
</dbReference>
<dbReference type="InterPro" id="IPR020606">
    <property type="entry name" value="Ribosomal_uS7_CS"/>
</dbReference>
<dbReference type="InterPro" id="IPR023798">
    <property type="entry name" value="Ribosomal_uS7_dom"/>
</dbReference>
<dbReference type="InterPro" id="IPR036823">
    <property type="entry name" value="Ribosomal_uS7_dom_sf"/>
</dbReference>
<dbReference type="NCBIfam" id="TIGR01029">
    <property type="entry name" value="rpsG_bact"/>
    <property type="match status" value="1"/>
</dbReference>
<dbReference type="PANTHER" id="PTHR11205">
    <property type="entry name" value="RIBOSOMAL PROTEIN S7"/>
    <property type="match status" value="1"/>
</dbReference>
<dbReference type="Pfam" id="PF00177">
    <property type="entry name" value="Ribosomal_S7"/>
    <property type="match status" value="1"/>
</dbReference>
<dbReference type="PIRSF" id="PIRSF002122">
    <property type="entry name" value="RPS7p_RPS7a_RPS5e_RPS7o"/>
    <property type="match status" value="1"/>
</dbReference>
<dbReference type="SUPFAM" id="SSF47973">
    <property type="entry name" value="Ribosomal protein S7"/>
    <property type="match status" value="1"/>
</dbReference>
<dbReference type="PROSITE" id="PS00052">
    <property type="entry name" value="RIBOSOMAL_S7"/>
    <property type="match status" value="1"/>
</dbReference>
<sequence length="156" mass="17604">MPRRRVIGQRKILPDPKFGSELLAKFVNILMVDGKKSTAESIVYSALETLAQRSGKSELEAFEVALENVRPTVEVKSRRVGGSTYQVPVEVRPVRRNALAMRWIVEAARKRGDKSMALRLANELSDAAENKGTAVKKREDVHRMAEANKAFAHYRW</sequence>
<protein>
    <recommendedName>
        <fullName evidence="2">Small ribosomal subunit protein uS7</fullName>
    </recommendedName>
    <alternativeName>
        <fullName evidence="3">30S ribosomal protein S7</fullName>
    </alternativeName>
</protein>